<name>PUR9_PSEAE</name>
<sequence length="535" mass="57666">MTDQTTRLPIRRALISVSDKTGVVDFARELVALGVEILSTGGTYKLLRDNGISAVEVADYTGFPEMMDGRVKTLHPKVHGGILGRRDLDGAVMEQHGIKPIDLVAVNLYPFEATVARPDCDLPTAIENIDIGGPTMVRSAAKNHKDVAIVVNAGDYAAVIESLKAGGLTYAQRFDLALKAFEHTSAYDGMIANYLGTIDQTRDTLGTADRGAFPRTFNSQFVKAQEMRYGENPHQSAAFYVEAKKGEASVSTAIQLQGKELSFNNVADTDAALECVKSFLKPACVIVKHANPCGVAVVPEDEGGIRKAYDLAYATDSESAFGGIIAFNRELDGETAKAIVERQFVEVIIAPKISAAAREVVAAKANVRLLECGEWPAERAPGWDFKRVNGGLLVQSRDIGMIKAEDLKIVTRRAPTEQEIHDLIFAWKVAKFVKSNAIVYARNRQTVGVGAGQMSRVNSARIAAIKAEHAGLEVKGAVMASDAFFPFRDGIDNAAKAGITAVIQPGGSMRDNEVIAAADEADIAMVFTGMRHFRH</sequence>
<keyword id="KW-0378">Hydrolase</keyword>
<keyword id="KW-0511">Multifunctional enzyme</keyword>
<keyword id="KW-0658">Purine biosynthesis</keyword>
<keyword id="KW-1185">Reference proteome</keyword>
<keyword id="KW-0808">Transferase</keyword>
<evidence type="ECO:0000255" key="1">
    <source>
        <dbReference type="HAMAP-Rule" id="MF_00139"/>
    </source>
</evidence>
<evidence type="ECO:0000255" key="2">
    <source>
        <dbReference type="PROSITE-ProRule" id="PRU01202"/>
    </source>
</evidence>
<proteinExistence type="inferred from homology"/>
<protein>
    <recommendedName>
        <fullName evidence="1">Bifunctional purine biosynthesis protein PurH</fullName>
    </recommendedName>
    <domain>
        <recommendedName>
            <fullName evidence="1">Phosphoribosylaminoimidazolecarboxamide formyltransferase</fullName>
            <ecNumber evidence="1">2.1.2.3</ecNumber>
        </recommendedName>
        <alternativeName>
            <fullName evidence="1">AICAR transformylase</fullName>
        </alternativeName>
    </domain>
    <domain>
        <recommendedName>
            <fullName evidence="1">IMP cyclohydrolase</fullName>
            <ecNumber evidence="1">3.5.4.10</ecNumber>
        </recommendedName>
        <alternativeName>
            <fullName evidence="1">ATIC</fullName>
        </alternativeName>
        <alternativeName>
            <fullName evidence="1">IMP synthase</fullName>
        </alternativeName>
        <alternativeName>
            <fullName evidence="1">Inosinicase</fullName>
        </alternativeName>
    </domain>
</protein>
<reference key="1">
    <citation type="journal article" date="2000" name="Nature">
        <title>Complete genome sequence of Pseudomonas aeruginosa PAO1, an opportunistic pathogen.</title>
        <authorList>
            <person name="Stover C.K."/>
            <person name="Pham X.-Q.T."/>
            <person name="Erwin A.L."/>
            <person name="Mizoguchi S.D."/>
            <person name="Warrener P."/>
            <person name="Hickey M.J."/>
            <person name="Brinkman F.S.L."/>
            <person name="Hufnagle W.O."/>
            <person name="Kowalik D.J."/>
            <person name="Lagrou M."/>
            <person name="Garber R.L."/>
            <person name="Goltry L."/>
            <person name="Tolentino E."/>
            <person name="Westbrock-Wadman S."/>
            <person name="Yuan Y."/>
            <person name="Brody L.L."/>
            <person name="Coulter S.N."/>
            <person name="Folger K.R."/>
            <person name="Kas A."/>
            <person name="Larbig K."/>
            <person name="Lim R.M."/>
            <person name="Smith K.A."/>
            <person name="Spencer D.H."/>
            <person name="Wong G.K.-S."/>
            <person name="Wu Z."/>
            <person name="Paulsen I.T."/>
            <person name="Reizer J."/>
            <person name="Saier M.H. Jr."/>
            <person name="Hancock R.E.W."/>
            <person name="Lory S."/>
            <person name="Olson M.V."/>
        </authorList>
    </citation>
    <scope>NUCLEOTIDE SEQUENCE [LARGE SCALE GENOMIC DNA]</scope>
    <source>
        <strain>ATCC 15692 / DSM 22644 / CIP 104116 / JCM 14847 / LMG 12228 / 1C / PRS 101 / PAO1</strain>
    </source>
</reference>
<accession>Q9HUV9</accession>
<organism>
    <name type="scientific">Pseudomonas aeruginosa (strain ATCC 15692 / DSM 22644 / CIP 104116 / JCM 14847 / LMG 12228 / 1C / PRS 101 / PAO1)</name>
    <dbReference type="NCBI Taxonomy" id="208964"/>
    <lineage>
        <taxon>Bacteria</taxon>
        <taxon>Pseudomonadati</taxon>
        <taxon>Pseudomonadota</taxon>
        <taxon>Gammaproteobacteria</taxon>
        <taxon>Pseudomonadales</taxon>
        <taxon>Pseudomonadaceae</taxon>
        <taxon>Pseudomonas</taxon>
    </lineage>
</organism>
<dbReference type="EC" id="2.1.2.3" evidence="1"/>
<dbReference type="EC" id="3.5.4.10" evidence="1"/>
<dbReference type="EMBL" id="AE004091">
    <property type="protein sequence ID" value="AAG08239.1"/>
    <property type="molecule type" value="Genomic_DNA"/>
</dbReference>
<dbReference type="PIR" id="F83040">
    <property type="entry name" value="F83040"/>
</dbReference>
<dbReference type="RefSeq" id="NP_253541.1">
    <property type="nucleotide sequence ID" value="NC_002516.2"/>
</dbReference>
<dbReference type="RefSeq" id="WP_003105151.1">
    <property type="nucleotide sequence ID" value="NZ_QZGE01000002.1"/>
</dbReference>
<dbReference type="SMR" id="Q9HUV9"/>
<dbReference type="FunCoup" id="Q9HUV9">
    <property type="interactions" value="691"/>
</dbReference>
<dbReference type="STRING" id="208964.PA4854"/>
<dbReference type="PaxDb" id="208964-PA4854"/>
<dbReference type="GeneID" id="880046"/>
<dbReference type="KEGG" id="pae:PA4854"/>
<dbReference type="PATRIC" id="fig|208964.12.peg.5086"/>
<dbReference type="PseudoCAP" id="PA4854"/>
<dbReference type="HOGENOM" id="CLU_016316_5_2_6"/>
<dbReference type="InParanoid" id="Q9HUV9"/>
<dbReference type="OrthoDB" id="9802065at2"/>
<dbReference type="PhylomeDB" id="Q9HUV9"/>
<dbReference type="BioCyc" id="PAER208964:G1FZ6-4968-MONOMER"/>
<dbReference type="UniPathway" id="UPA00074">
    <property type="reaction ID" value="UER00133"/>
</dbReference>
<dbReference type="UniPathway" id="UPA00074">
    <property type="reaction ID" value="UER00135"/>
</dbReference>
<dbReference type="Proteomes" id="UP000002438">
    <property type="component" value="Chromosome"/>
</dbReference>
<dbReference type="GO" id="GO:0005829">
    <property type="term" value="C:cytosol"/>
    <property type="evidence" value="ECO:0000318"/>
    <property type="project" value="GO_Central"/>
</dbReference>
<dbReference type="GO" id="GO:0003937">
    <property type="term" value="F:IMP cyclohydrolase activity"/>
    <property type="evidence" value="ECO:0000318"/>
    <property type="project" value="GO_Central"/>
</dbReference>
<dbReference type="GO" id="GO:0004643">
    <property type="term" value="F:phosphoribosylaminoimidazolecarboxamide formyltransferase activity"/>
    <property type="evidence" value="ECO:0000318"/>
    <property type="project" value="GO_Central"/>
</dbReference>
<dbReference type="GO" id="GO:0006189">
    <property type="term" value="P:'de novo' IMP biosynthetic process"/>
    <property type="evidence" value="ECO:0000318"/>
    <property type="project" value="GO_Central"/>
</dbReference>
<dbReference type="CDD" id="cd01421">
    <property type="entry name" value="IMPCH"/>
    <property type="match status" value="1"/>
</dbReference>
<dbReference type="FunFam" id="3.40.140.20:FF:000001">
    <property type="entry name" value="Bifunctional purine biosynthesis protein PurH"/>
    <property type="match status" value="1"/>
</dbReference>
<dbReference type="FunFam" id="3.40.140.20:FF:000002">
    <property type="entry name" value="Bifunctional purine biosynthesis protein PurH"/>
    <property type="match status" value="1"/>
</dbReference>
<dbReference type="FunFam" id="3.40.50.1380:FF:000001">
    <property type="entry name" value="Bifunctional purine biosynthesis protein PurH"/>
    <property type="match status" value="1"/>
</dbReference>
<dbReference type="Gene3D" id="3.40.140.20">
    <property type="match status" value="2"/>
</dbReference>
<dbReference type="Gene3D" id="3.40.50.1380">
    <property type="entry name" value="Methylglyoxal synthase-like domain"/>
    <property type="match status" value="1"/>
</dbReference>
<dbReference type="HAMAP" id="MF_00139">
    <property type="entry name" value="PurH"/>
    <property type="match status" value="1"/>
</dbReference>
<dbReference type="InterPro" id="IPR024051">
    <property type="entry name" value="AICAR_Tfase_dup_dom_sf"/>
</dbReference>
<dbReference type="InterPro" id="IPR016193">
    <property type="entry name" value="Cytidine_deaminase-like"/>
</dbReference>
<dbReference type="InterPro" id="IPR011607">
    <property type="entry name" value="MGS-like_dom"/>
</dbReference>
<dbReference type="InterPro" id="IPR036914">
    <property type="entry name" value="MGS-like_dom_sf"/>
</dbReference>
<dbReference type="InterPro" id="IPR002695">
    <property type="entry name" value="PurH-like"/>
</dbReference>
<dbReference type="NCBIfam" id="NF002049">
    <property type="entry name" value="PRK00881.1"/>
    <property type="match status" value="1"/>
</dbReference>
<dbReference type="NCBIfam" id="TIGR00355">
    <property type="entry name" value="purH"/>
    <property type="match status" value="1"/>
</dbReference>
<dbReference type="PANTHER" id="PTHR11692:SF0">
    <property type="entry name" value="BIFUNCTIONAL PURINE BIOSYNTHESIS PROTEIN ATIC"/>
    <property type="match status" value="1"/>
</dbReference>
<dbReference type="PANTHER" id="PTHR11692">
    <property type="entry name" value="BIFUNCTIONAL PURINE BIOSYNTHESIS PROTEIN PURH"/>
    <property type="match status" value="1"/>
</dbReference>
<dbReference type="Pfam" id="PF01808">
    <property type="entry name" value="AICARFT_IMPCHas"/>
    <property type="match status" value="1"/>
</dbReference>
<dbReference type="Pfam" id="PF02142">
    <property type="entry name" value="MGS"/>
    <property type="match status" value="1"/>
</dbReference>
<dbReference type="PIRSF" id="PIRSF000414">
    <property type="entry name" value="AICARFT_IMPCHas"/>
    <property type="match status" value="1"/>
</dbReference>
<dbReference type="SMART" id="SM00798">
    <property type="entry name" value="AICARFT_IMPCHas"/>
    <property type="match status" value="1"/>
</dbReference>
<dbReference type="SMART" id="SM00851">
    <property type="entry name" value="MGS"/>
    <property type="match status" value="1"/>
</dbReference>
<dbReference type="SUPFAM" id="SSF53927">
    <property type="entry name" value="Cytidine deaminase-like"/>
    <property type="match status" value="1"/>
</dbReference>
<dbReference type="SUPFAM" id="SSF52335">
    <property type="entry name" value="Methylglyoxal synthase-like"/>
    <property type="match status" value="1"/>
</dbReference>
<dbReference type="PROSITE" id="PS51855">
    <property type="entry name" value="MGS"/>
    <property type="match status" value="1"/>
</dbReference>
<comment type="catalytic activity">
    <reaction evidence="1">
        <text>(6R)-10-formyltetrahydrofolate + 5-amino-1-(5-phospho-beta-D-ribosyl)imidazole-4-carboxamide = 5-formamido-1-(5-phospho-D-ribosyl)imidazole-4-carboxamide + (6S)-5,6,7,8-tetrahydrofolate</text>
        <dbReference type="Rhea" id="RHEA:22192"/>
        <dbReference type="ChEBI" id="CHEBI:57453"/>
        <dbReference type="ChEBI" id="CHEBI:58467"/>
        <dbReference type="ChEBI" id="CHEBI:58475"/>
        <dbReference type="ChEBI" id="CHEBI:195366"/>
        <dbReference type="EC" id="2.1.2.3"/>
    </reaction>
</comment>
<comment type="catalytic activity">
    <reaction evidence="1">
        <text>IMP + H2O = 5-formamido-1-(5-phospho-D-ribosyl)imidazole-4-carboxamide</text>
        <dbReference type="Rhea" id="RHEA:18445"/>
        <dbReference type="ChEBI" id="CHEBI:15377"/>
        <dbReference type="ChEBI" id="CHEBI:58053"/>
        <dbReference type="ChEBI" id="CHEBI:58467"/>
        <dbReference type="EC" id="3.5.4.10"/>
    </reaction>
</comment>
<comment type="pathway">
    <text evidence="1">Purine metabolism; IMP biosynthesis via de novo pathway; 5-formamido-1-(5-phospho-D-ribosyl)imidazole-4-carboxamide from 5-amino-1-(5-phospho-D-ribosyl)imidazole-4-carboxamide (10-formyl THF route): step 1/1.</text>
</comment>
<comment type="pathway">
    <text evidence="1">Purine metabolism; IMP biosynthesis via de novo pathway; IMP from 5-formamido-1-(5-phospho-D-ribosyl)imidazole-4-carboxamide: step 1/1.</text>
</comment>
<comment type="domain">
    <text evidence="1">The IMP cyclohydrolase activity resides in the N-terminal region.</text>
</comment>
<comment type="similarity">
    <text evidence="1">Belongs to the PurH family.</text>
</comment>
<gene>
    <name evidence="1" type="primary">purH</name>
    <name type="ordered locus">PA4854</name>
</gene>
<feature type="chain" id="PRO_0000192112" description="Bifunctional purine biosynthesis protein PurH">
    <location>
        <begin position="1"/>
        <end position="535"/>
    </location>
</feature>
<feature type="domain" description="MGS-like" evidence="2">
    <location>
        <begin position="6"/>
        <end position="151"/>
    </location>
</feature>